<evidence type="ECO:0000250" key="1"/>
<evidence type="ECO:0000255" key="2"/>
<evidence type="ECO:0000256" key="3">
    <source>
        <dbReference type="SAM" id="MobiDB-lite"/>
    </source>
</evidence>
<evidence type="ECO:0000305" key="4"/>
<protein>
    <recommendedName>
        <fullName>RNA pseudouridine synthase 3, mitochondrial</fullName>
        <ecNumber>5.4.99.-</ecNumber>
    </recommendedName>
    <alternativeName>
        <fullName>RNA pseudouridylate synthase 3</fullName>
    </alternativeName>
    <alternativeName>
        <fullName>RNA-uridine isomerase 3</fullName>
    </alternativeName>
</protein>
<reference key="1">
    <citation type="journal article" date="2005" name="Nature">
        <title>The map-based sequence of the rice genome.</title>
        <authorList>
            <consortium name="International rice genome sequencing project (IRGSP)"/>
        </authorList>
    </citation>
    <scope>NUCLEOTIDE SEQUENCE [LARGE SCALE GENOMIC DNA]</scope>
    <source>
        <strain>cv. Nipponbare</strain>
    </source>
</reference>
<reference key="2">
    <citation type="journal article" date="2008" name="Nucleic Acids Res.">
        <title>The rice annotation project database (RAP-DB): 2008 update.</title>
        <authorList>
            <consortium name="The rice annotation project (RAP)"/>
        </authorList>
    </citation>
    <scope>GENOME REANNOTATION</scope>
    <source>
        <strain>cv. Nipponbare</strain>
    </source>
</reference>
<reference key="3">
    <citation type="journal article" date="2013" name="Rice">
        <title>Improvement of the Oryza sativa Nipponbare reference genome using next generation sequence and optical map data.</title>
        <authorList>
            <person name="Kawahara Y."/>
            <person name="de la Bastide M."/>
            <person name="Hamilton J.P."/>
            <person name="Kanamori H."/>
            <person name="McCombie W.R."/>
            <person name="Ouyang S."/>
            <person name="Schwartz D.C."/>
            <person name="Tanaka T."/>
            <person name="Wu J."/>
            <person name="Zhou S."/>
            <person name="Childs K.L."/>
            <person name="Davidson R.M."/>
            <person name="Lin H."/>
            <person name="Quesada-Ocampo L."/>
            <person name="Vaillancourt B."/>
            <person name="Sakai H."/>
            <person name="Lee S.S."/>
            <person name="Kim J."/>
            <person name="Numa H."/>
            <person name="Itoh T."/>
            <person name="Buell C.R."/>
            <person name="Matsumoto T."/>
        </authorList>
    </citation>
    <scope>GENOME REANNOTATION</scope>
    <source>
        <strain>cv. Nipponbare</strain>
    </source>
</reference>
<reference key="4">
    <citation type="journal article" date="2003" name="Science">
        <title>Collection, mapping, and annotation of over 28,000 cDNA clones from japonica rice.</title>
        <authorList>
            <consortium name="The rice full-length cDNA consortium"/>
        </authorList>
    </citation>
    <scope>NUCLEOTIDE SEQUENCE [LARGE SCALE MRNA]</scope>
    <source>
        <strain>cv. Nipponbare</strain>
    </source>
</reference>
<sequence>MLCRRRRVGAAVRWLSRLAPPAPAEADPVVVRVDGSNVARLGKPKPGPRPRQLLSLPPFPGGGDGDPLPGRKAAAPRRVTAVSWVKHYLADVPQEVVQAHFNKRLVYSECSDHEVSVETIKSQKHHLKKIKHNDVMEPGMRIHLPVSVAEGEIKKRYETIPTATLHPNKDEIEYLRRLVIHKDSAILVLNKPPKVPMKGNLPVHNSMDVLAAAALSYGNEEGPKLVHRLDRESSGLLLFGRTKESFTRLHWLFTSVNLAKTNSQVWNAACEAYMQRYWALVIGTPKEREGIISAPLSKVLLDDGKAERVILAHPSGIDGAQEAVTAYRVMGPTIHGCSWIELRPLTGRKHQLRVHCAEALGTPIVGDYKYGWFVHQRWKQNPQPDFEPFTGEPYKLRRPEGLEIQKGSVLSKVPLLHLHCREMVIPNIAKFLSSNGEWHENGAPWSKEKPNLLRFIAPMPAHMKISWNIMSSYLV</sequence>
<dbReference type="EC" id="5.4.99.-"/>
<dbReference type="EMBL" id="AP004622">
    <property type="protein sequence ID" value="BAD09699.1"/>
    <property type="status" value="ALT_SEQ"/>
    <property type="molecule type" value="Genomic_DNA"/>
</dbReference>
<dbReference type="EMBL" id="AP004622">
    <property type="protein sequence ID" value="BAD09700.1"/>
    <property type="status" value="ALT_SEQ"/>
    <property type="molecule type" value="Genomic_DNA"/>
</dbReference>
<dbReference type="EMBL" id="AP005509">
    <property type="protein sequence ID" value="BAD10434.1"/>
    <property type="status" value="ALT_SEQ"/>
    <property type="molecule type" value="Genomic_DNA"/>
</dbReference>
<dbReference type="EMBL" id="AP005509">
    <property type="protein sequence ID" value="BAD10435.1"/>
    <property type="status" value="ALT_SEQ"/>
    <property type="molecule type" value="Genomic_DNA"/>
</dbReference>
<dbReference type="EMBL" id="AP008214">
    <property type="protein sequence ID" value="BAF24179.1"/>
    <property type="molecule type" value="Genomic_DNA"/>
</dbReference>
<dbReference type="EMBL" id="AP014964">
    <property type="protein sequence ID" value="BAT06288.1"/>
    <property type="molecule type" value="Genomic_DNA"/>
</dbReference>
<dbReference type="EMBL" id="AK120052">
    <property type="status" value="NOT_ANNOTATED_CDS"/>
    <property type="molecule type" value="mRNA"/>
</dbReference>
<dbReference type="RefSeq" id="XP_015650456.1">
    <property type="nucleotide sequence ID" value="XM_015794970.1"/>
</dbReference>
<dbReference type="FunCoup" id="Q0J4D4">
    <property type="interactions" value="416"/>
</dbReference>
<dbReference type="STRING" id="39947.Q0J4D4"/>
<dbReference type="PaxDb" id="39947-Q0J4D4"/>
<dbReference type="EnsemblPlants" id="Os08t0520100-01">
    <property type="protein sequence ID" value="Os08t0520100-01"/>
    <property type="gene ID" value="Os08g0520100"/>
</dbReference>
<dbReference type="Gramene" id="Os08t0520100-01">
    <property type="protein sequence ID" value="Os08t0520100-01"/>
    <property type="gene ID" value="Os08g0520100"/>
</dbReference>
<dbReference type="KEGG" id="dosa:Os08g0520100"/>
<dbReference type="eggNOG" id="KOG1919">
    <property type="taxonomic scope" value="Eukaryota"/>
</dbReference>
<dbReference type="InParanoid" id="Q0J4D4"/>
<dbReference type="OMA" id="ACEATTQ"/>
<dbReference type="OrthoDB" id="428658at2759"/>
<dbReference type="Proteomes" id="UP000000763">
    <property type="component" value="Chromosome 8"/>
</dbReference>
<dbReference type="Proteomes" id="UP000059680">
    <property type="component" value="Chromosome 8"/>
</dbReference>
<dbReference type="ExpressionAtlas" id="Q0J4D4">
    <property type="expression patterns" value="baseline and differential"/>
</dbReference>
<dbReference type="GO" id="GO:0005739">
    <property type="term" value="C:mitochondrion"/>
    <property type="evidence" value="ECO:0007669"/>
    <property type="project" value="UniProtKB-SubCell"/>
</dbReference>
<dbReference type="GO" id="GO:0009982">
    <property type="term" value="F:pseudouridine synthase activity"/>
    <property type="evidence" value="ECO:0000318"/>
    <property type="project" value="GO_Central"/>
</dbReference>
<dbReference type="GO" id="GO:0003723">
    <property type="term" value="F:RNA binding"/>
    <property type="evidence" value="ECO:0007669"/>
    <property type="project" value="UniProtKB-KW"/>
</dbReference>
<dbReference type="GO" id="GO:0000455">
    <property type="term" value="P:enzyme-directed rRNA pseudouridine synthesis"/>
    <property type="evidence" value="ECO:0000318"/>
    <property type="project" value="GO_Central"/>
</dbReference>
<dbReference type="CDD" id="cd02869">
    <property type="entry name" value="PseudoU_synth_RluA_like"/>
    <property type="match status" value="1"/>
</dbReference>
<dbReference type="Gene3D" id="3.30.2350.10">
    <property type="entry name" value="Pseudouridine synthase"/>
    <property type="match status" value="1"/>
</dbReference>
<dbReference type="InterPro" id="IPR020103">
    <property type="entry name" value="PsdUridine_synth_cat_dom_sf"/>
</dbReference>
<dbReference type="InterPro" id="IPR006145">
    <property type="entry name" value="PsdUridine_synth_RsuA/RluA"/>
</dbReference>
<dbReference type="InterPro" id="IPR050188">
    <property type="entry name" value="RluA_PseudoU_synthase"/>
</dbReference>
<dbReference type="PANTHER" id="PTHR21600">
    <property type="entry name" value="MITOCHONDRIAL RNA PSEUDOURIDINE SYNTHASE"/>
    <property type="match status" value="1"/>
</dbReference>
<dbReference type="PANTHER" id="PTHR21600:SF53">
    <property type="entry name" value="RNA PSEUDOURIDINE SYNTHASE 3, MITOCHONDRIAL"/>
    <property type="match status" value="1"/>
</dbReference>
<dbReference type="Pfam" id="PF00849">
    <property type="entry name" value="PseudoU_synth_2"/>
    <property type="match status" value="1"/>
</dbReference>
<dbReference type="SUPFAM" id="SSF55120">
    <property type="entry name" value="Pseudouridine synthase"/>
    <property type="match status" value="1"/>
</dbReference>
<keyword id="KW-0413">Isomerase</keyword>
<keyword id="KW-0496">Mitochondrion</keyword>
<keyword id="KW-1185">Reference proteome</keyword>
<keyword id="KW-0694">RNA-binding</keyword>
<keyword id="KW-0809">Transit peptide</keyword>
<accession>Q0J4D4</accession>
<accession>A0A0P0XHV8</accession>
<accession>Q6YZW4</accession>
<accession>Q6YZW5</accession>
<proteinExistence type="evidence at transcript level"/>
<comment type="catalytic activity">
    <reaction>
        <text>a uridine in RNA = a pseudouridine in RNA</text>
        <dbReference type="Rhea" id="RHEA:48348"/>
        <dbReference type="Rhea" id="RHEA-COMP:12068"/>
        <dbReference type="Rhea" id="RHEA-COMP:12069"/>
        <dbReference type="ChEBI" id="CHEBI:65314"/>
        <dbReference type="ChEBI" id="CHEBI:65315"/>
    </reaction>
</comment>
<comment type="subcellular location">
    <subcellularLocation>
        <location evidence="4">Mitochondrion</location>
    </subcellularLocation>
</comment>
<comment type="similarity">
    <text evidence="4">Belongs to the pseudouridine synthase RluA family.</text>
</comment>
<comment type="sequence caution" evidence="4">
    <conflict type="erroneous gene model prediction">
        <sequence resource="EMBL-CDS" id="BAD09699"/>
    </conflict>
    <text>Was originally thought to correspond to two different genes.</text>
</comment>
<comment type="sequence caution" evidence="4">
    <conflict type="erroneous gene model prediction">
        <sequence resource="EMBL-CDS" id="BAD09700"/>
    </conflict>
    <text>Was originally thought to correspond to two different genes.</text>
</comment>
<comment type="sequence caution" evidence="4">
    <conflict type="erroneous gene model prediction">
        <sequence resource="EMBL-CDS" id="BAD10434"/>
    </conflict>
    <text>Was originally thought to correspond to two different genes.</text>
</comment>
<comment type="sequence caution" evidence="4">
    <conflict type="erroneous gene model prediction">
        <sequence resource="EMBL-CDS" id="BAD10435"/>
    </conflict>
    <text>Was originally thought to correspond to two different genes.</text>
</comment>
<name>PUS3_ORYSJ</name>
<organism>
    <name type="scientific">Oryza sativa subsp. japonica</name>
    <name type="common">Rice</name>
    <dbReference type="NCBI Taxonomy" id="39947"/>
    <lineage>
        <taxon>Eukaryota</taxon>
        <taxon>Viridiplantae</taxon>
        <taxon>Streptophyta</taxon>
        <taxon>Embryophyta</taxon>
        <taxon>Tracheophyta</taxon>
        <taxon>Spermatophyta</taxon>
        <taxon>Magnoliopsida</taxon>
        <taxon>Liliopsida</taxon>
        <taxon>Poales</taxon>
        <taxon>Poaceae</taxon>
        <taxon>BOP clade</taxon>
        <taxon>Oryzoideae</taxon>
        <taxon>Oryzeae</taxon>
        <taxon>Oryzinae</taxon>
        <taxon>Oryza</taxon>
        <taxon>Oryza sativa</taxon>
    </lineage>
</organism>
<gene>
    <name type="ordered locus">Os08g0520100</name>
    <name type="ordered locus">LOC_Os08g40860</name>
    <name type="ORF">OJ1003_A09.9/OJ1003_A09.10</name>
    <name type="ORF">P0689E12.33 /P0689E12.34</name>
</gene>
<feature type="transit peptide" description="Mitochondrion" evidence="2">
    <location>
        <begin position="1"/>
        <end position="15"/>
    </location>
</feature>
<feature type="chain" id="PRO_0000368024" description="RNA pseudouridine synthase 3, mitochondrial">
    <location>
        <begin position="16"/>
        <end position="475"/>
    </location>
</feature>
<feature type="domain" description="S4 RNA-binding">
    <location>
        <begin position="90"/>
        <end position="160"/>
    </location>
</feature>
<feature type="region of interest" description="Disordered" evidence="3">
    <location>
        <begin position="40"/>
        <end position="74"/>
    </location>
</feature>
<feature type="active site" evidence="1">
    <location>
        <position position="230"/>
    </location>
</feature>
<feature type="sequence conflict" description="In Ref. 4; AK120052." evidence="4" ref="4">
    <original>D</original>
    <variation>V</variation>
    <location>
        <position position="64"/>
    </location>
</feature>
<feature type="sequence conflict" description="In Ref. 4; AK120052." evidence="4" ref="4">
    <original>S</original>
    <variation>N</variation>
    <location>
        <position position="122"/>
    </location>
</feature>